<sequence length="775" mass="86076">MAADDKVAILTDDEEEQKRKYVLADPFNGICREPEPPSNETPSSTETSAIPEEEIDWIEKHCVKVNNDLLISKVFYFFFYSAYGSLYPLLPVYYKQLGMSPSQSGLLVGIRYFIEFCSAPFWGVVADRFRKGKIVLLFSLLCWVLFNLGIGFVKPATLRCLPKIPPTAHPTNVSHPVTVLPMNSSTVAFFSTPPKLLQKRDVQLSETEPNISDIDLVSTALTLTSEPTRRPQTEAITHPVTGLILNTSTVTLPPTGNVTRETTIAVVTTTKSLPSDQVTLVYDQQEVEAIFLIILVVVIIGEFFSASSVTIVDTVTLQYLGKHRDRYGLQRMWGSLGWGLAMLSVGIGIDYTHIDVLIDGKGCKPPEYRNYQIVFIVFGVLMTMALIVATQFRFRYNHFNNSDGKGKEVEIPQVERDNSTESSEETPTAATHSQAFNFWDLIKLLCSVQYGSVLFVAWFMGFGYGFVFTFLYWHLEDLNGTTTLFGVCSVLSHVSELTAYFFSHKLIELIGHIRVLYIGLACNTARYIYISYLENAWTVLPMEVLQGVTHAAIWAACISYLSAAVPPELRTSAQGILQGLHLGLGRGCGAMIGGVLVNYFGAAATFRGIGMACLVILLLFALIQWLAVPDEEEDKTMLAERIPVPSSPVPIATIDLVQQQTEDVMPRVEARLPPKKTKHQEEQEDVNKPAWGVSSSPWVTFVYALYQVKELIQLTRESRASEIQPLQVTLCWASVASAPLLPPCSSKHMGNRKTGMLAKDISGLRSLCHSVYQVA</sequence>
<name>MFSD6_MOUSE</name>
<feature type="chain" id="PRO_0000321941" description="Major facilitator superfamily domain-containing protein 6">
    <location>
        <begin position="1"/>
        <end position="775"/>
    </location>
</feature>
<feature type="transmembrane region" description="Helical" evidence="1">
    <location>
        <begin position="74"/>
        <end position="94"/>
    </location>
</feature>
<feature type="transmembrane region" description="Helical" evidence="1">
    <location>
        <begin position="106"/>
        <end position="126"/>
    </location>
</feature>
<feature type="transmembrane region" description="Helical" evidence="1">
    <location>
        <begin position="133"/>
        <end position="153"/>
    </location>
</feature>
<feature type="transmembrane region" description="Helical" evidence="1">
    <location>
        <begin position="289"/>
        <end position="309"/>
    </location>
</feature>
<feature type="transmembrane region" description="Helical" evidence="1">
    <location>
        <begin position="338"/>
        <end position="358"/>
    </location>
</feature>
<feature type="transmembrane region" description="Helical" evidence="1">
    <location>
        <begin position="372"/>
        <end position="392"/>
    </location>
</feature>
<feature type="transmembrane region" description="Helical" evidence="1">
    <location>
        <begin position="453"/>
        <end position="473"/>
    </location>
</feature>
<feature type="transmembrane region" description="Helical" evidence="1">
    <location>
        <begin position="482"/>
        <end position="502"/>
    </location>
</feature>
<feature type="transmembrane region" description="Helical" evidence="1">
    <location>
        <begin position="510"/>
        <end position="530"/>
    </location>
</feature>
<feature type="transmembrane region" description="Helical" evidence="1">
    <location>
        <begin position="547"/>
        <end position="567"/>
    </location>
</feature>
<feature type="transmembrane region" description="Helical" evidence="1">
    <location>
        <begin position="582"/>
        <end position="602"/>
    </location>
</feature>
<feature type="transmembrane region" description="Helical" evidence="1">
    <location>
        <begin position="608"/>
        <end position="628"/>
    </location>
</feature>
<feature type="region of interest" description="Disordered" evidence="2">
    <location>
        <begin position="28"/>
        <end position="47"/>
    </location>
</feature>
<feature type="compositionally biased region" description="Low complexity" evidence="2">
    <location>
        <begin position="38"/>
        <end position="47"/>
    </location>
</feature>
<feature type="modified residue" description="Phosphothreonine" evidence="6 7">
    <location>
        <position position="11"/>
    </location>
</feature>
<feature type="splice variant" id="VSP_031836" description="In isoform 2." evidence="4">
    <original>VTLCWASVASAPLLPPCSSKHMGNRKTGMLAKDISGLRSLCHSVYQVA</original>
    <variation>GTSENREASPAGGAQRAPRETHSASPRNQPSPDTAASQTQSSPAHPS</variation>
    <location>
        <begin position="728"/>
        <end position="775"/>
    </location>
</feature>
<proteinExistence type="evidence at protein level"/>
<gene>
    <name type="primary">Mfsd6</name>
    <name type="synonym">Mmr2</name>
</gene>
<comment type="function">
    <text evidence="3">MHC class I receptor. Binds only to H-2 class I histocompatibility antigen, K-D alpha chain (H-2K(D)).</text>
</comment>
<comment type="subcellular location">
    <subcellularLocation>
        <location evidence="5">Membrane</location>
        <topology evidence="5">Multi-pass membrane protein</topology>
    </subcellularLocation>
</comment>
<comment type="alternative products">
    <event type="alternative splicing"/>
    <isoform>
        <id>Q8CBH5-1</id>
        <name>1</name>
        <sequence type="displayed"/>
    </isoform>
    <isoform>
        <id>Q8CBH5-2</id>
        <name>2</name>
        <sequence type="described" ref="VSP_031836"/>
    </isoform>
</comment>
<comment type="similarity">
    <text evidence="5">Belongs to the major facilitator superfamily. MFSD6 family.</text>
</comment>
<comment type="sequence caution" evidence="5">
    <conflict type="erroneous initiation">
        <sequence resource="EMBL-CDS" id="AAH17534"/>
    </conflict>
</comment>
<comment type="sequence caution" evidence="5">
    <conflict type="erroneous initiation">
        <sequence resource="EMBL-CDS" id="BAC32900"/>
    </conflict>
    <text>Truncated N-terminus.</text>
</comment>
<comment type="sequence caution" evidence="5">
    <conflict type="frameshift">
        <sequence resource="EMBL-CDS" id="BAC32900"/>
    </conflict>
</comment>
<comment type="sequence caution" evidence="5">
    <conflict type="erroneous initiation">
        <sequence resource="EMBL-CDS" id="BAF36946"/>
    </conflict>
</comment>
<protein>
    <recommendedName>
        <fullName>Major facilitator superfamily domain-containing protein 6</fullName>
    </recommendedName>
    <alternativeName>
        <fullName>Macrophage MHC class I receptor 2</fullName>
    </alternativeName>
</protein>
<evidence type="ECO:0000255" key="1"/>
<evidence type="ECO:0000256" key="2">
    <source>
        <dbReference type="SAM" id="MobiDB-lite"/>
    </source>
</evidence>
<evidence type="ECO:0000269" key="3">
    <source>
    </source>
</evidence>
<evidence type="ECO:0000303" key="4">
    <source>
    </source>
</evidence>
<evidence type="ECO:0000305" key="5"/>
<evidence type="ECO:0007744" key="6">
    <source>
    </source>
</evidence>
<evidence type="ECO:0007744" key="7">
    <source>
    </source>
</evidence>
<keyword id="KW-1064">Adaptive immunity</keyword>
<keyword id="KW-0025">Alternative splicing</keyword>
<keyword id="KW-0391">Immunity</keyword>
<keyword id="KW-0472">Membrane</keyword>
<keyword id="KW-0597">Phosphoprotein</keyword>
<keyword id="KW-0675">Receptor</keyword>
<keyword id="KW-1185">Reference proteome</keyword>
<keyword id="KW-0812">Transmembrane</keyword>
<keyword id="KW-1133">Transmembrane helix</keyword>
<dbReference type="EMBL" id="AK035995">
    <property type="protein sequence ID" value="BAC29272.1"/>
    <property type="molecule type" value="mRNA"/>
</dbReference>
<dbReference type="EMBL" id="AK046866">
    <property type="protein sequence ID" value="BAC32900.1"/>
    <property type="status" value="ALT_SEQ"/>
    <property type="molecule type" value="mRNA"/>
</dbReference>
<dbReference type="EMBL" id="AB247936">
    <property type="protein sequence ID" value="BAF36946.1"/>
    <property type="status" value="ALT_INIT"/>
    <property type="molecule type" value="mRNA"/>
</dbReference>
<dbReference type="EMBL" id="BC017534">
    <property type="protein sequence ID" value="AAH17534.1"/>
    <property type="status" value="ALT_INIT"/>
    <property type="molecule type" value="mRNA"/>
</dbReference>
<dbReference type="CCDS" id="CCDS14946.1">
    <molecule id="Q8CBH5-1"/>
</dbReference>
<dbReference type="RefSeq" id="NP_835182.1">
    <molecule id="Q8CBH5-1"/>
    <property type="nucleotide sequence ID" value="NM_178081.5"/>
</dbReference>
<dbReference type="BioGRID" id="221106">
    <property type="interactions" value="1"/>
</dbReference>
<dbReference type="FunCoup" id="Q8CBH5">
    <property type="interactions" value="889"/>
</dbReference>
<dbReference type="STRING" id="10090.ENSMUSP00000122881"/>
<dbReference type="TCDB" id="2.A.1.65.6">
    <property type="family name" value="the major facilitator superfamily (mfs)"/>
</dbReference>
<dbReference type="GlyGen" id="Q8CBH5">
    <property type="glycosylation" value="7 sites, 6 N-linked glycans (6 sites)"/>
</dbReference>
<dbReference type="iPTMnet" id="Q8CBH5"/>
<dbReference type="SwissPalm" id="Q8CBH5"/>
<dbReference type="jPOST" id="Q8CBH5"/>
<dbReference type="PaxDb" id="10090-ENSMUSP00000122881"/>
<dbReference type="PeptideAtlas" id="Q8CBH5"/>
<dbReference type="ProteomicsDB" id="293466">
    <molecule id="Q8CBH5-1"/>
</dbReference>
<dbReference type="ProteomicsDB" id="293467">
    <molecule id="Q8CBH5-2"/>
</dbReference>
<dbReference type="Antibodypedia" id="19836">
    <property type="antibodies" value="102 antibodies from 21 providers"/>
</dbReference>
<dbReference type="Ensembl" id="ENSMUST00000087701.4">
    <molecule id="Q8CBH5-1"/>
    <property type="protein sequence ID" value="ENSMUSP00000084991.4"/>
    <property type="gene ID" value="ENSMUSG00000041439.16"/>
</dbReference>
<dbReference type="GeneID" id="98682"/>
<dbReference type="KEGG" id="mmu:98682"/>
<dbReference type="UCSC" id="uc007aym.1">
    <molecule id="Q8CBH5-1"/>
    <property type="organism name" value="mouse"/>
</dbReference>
<dbReference type="AGR" id="MGI:1922925"/>
<dbReference type="CTD" id="54842"/>
<dbReference type="MGI" id="MGI:1922925">
    <property type="gene designation" value="Mfsd6"/>
</dbReference>
<dbReference type="VEuPathDB" id="HostDB:ENSMUSG00000041439"/>
<dbReference type="eggNOG" id="KOG3762">
    <property type="taxonomic scope" value="Eukaryota"/>
</dbReference>
<dbReference type="GeneTree" id="ENSGT00530000063599"/>
<dbReference type="InParanoid" id="Q8CBH5"/>
<dbReference type="OrthoDB" id="5989317at2759"/>
<dbReference type="BioGRID-ORCS" id="98682">
    <property type="hits" value="2 hits in 79 CRISPR screens"/>
</dbReference>
<dbReference type="ChiTaRS" id="Mfsd6">
    <property type="organism name" value="mouse"/>
</dbReference>
<dbReference type="PRO" id="PR:Q8CBH5"/>
<dbReference type="Proteomes" id="UP000000589">
    <property type="component" value="Chromosome 1"/>
</dbReference>
<dbReference type="RNAct" id="Q8CBH5">
    <property type="molecule type" value="protein"/>
</dbReference>
<dbReference type="Bgee" id="ENSMUSG00000041439">
    <property type="expression patterns" value="Expressed in motor neuron and 238 other cell types or tissues"/>
</dbReference>
<dbReference type="ExpressionAtlas" id="Q8CBH5">
    <property type="expression patterns" value="baseline and differential"/>
</dbReference>
<dbReference type="GO" id="GO:0005886">
    <property type="term" value="C:plasma membrane"/>
    <property type="evidence" value="ECO:0000314"/>
    <property type="project" value="MGI"/>
</dbReference>
<dbReference type="GO" id="GO:0042288">
    <property type="term" value="F:MHC class I protein binding"/>
    <property type="evidence" value="ECO:0000353"/>
    <property type="project" value="MGI"/>
</dbReference>
<dbReference type="GO" id="GO:0032393">
    <property type="term" value="F:MHC class I receptor activity"/>
    <property type="evidence" value="ECO:0000353"/>
    <property type="project" value="MGI"/>
</dbReference>
<dbReference type="GO" id="GO:0002250">
    <property type="term" value="P:adaptive immune response"/>
    <property type="evidence" value="ECO:0007669"/>
    <property type="project" value="UniProtKB-KW"/>
</dbReference>
<dbReference type="GO" id="GO:0042590">
    <property type="term" value="P:antigen processing and presentation of exogenous peptide antigen via MHC class I"/>
    <property type="evidence" value="ECO:0000314"/>
    <property type="project" value="MGI"/>
</dbReference>
<dbReference type="CDD" id="cd17335">
    <property type="entry name" value="MFS_MFSD6"/>
    <property type="match status" value="1"/>
</dbReference>
<dbReference type="FunFam" id="1.20.1250.20:FF:000136">
    <property type="entry name" value="Major facilitator superfamily domain-containing protein 6"/>
    <property type="match status" value="1"/>
</dbReference>
<dbReference type="FunFam" id="1.20.1250.20:FF:000229">
    <property type="entry name" value="Major facilitator superfamily domain-containing protein 6"/>
    <property type="match status" value="1"/>
</dbReference>
<dbReference type="FunFam" id="1.20.1250.20:FF:000275">
    <property type="entry name" value="Major facilitator superfamily domain-containing protein 6"/>
    <property type="match status" value="1"/>
</dbReference>
<dbReference type="Gene3D" id="1.20.1250.20">
    <property type="entry name" value="MFS general substrate transporter like domains"/>
    <property type="match status" value="3"/>
</dbReference>
<dbReference type="InterPro" id="IPR024989">
    <property type="entry name" value="MFS_assoc_dom"/>
</dbReference>
<dbReference type="InterPro" id="IPR051717">
    <property type="entry name" value="MFS_MFSD6"/>
</dbReference>
<dbReference type="InterPro" id="IPR036259">
    <property type="entry name" value="MFS_trans_sf"/>
</dbReference>
<dbReference type="PANTHER" id="PTHR16172:SF2">
    <property type="entry name" value="MAJOR FACILITATOR SUPERFAMILY DOMAIN-CONTAINING PROTEIN 6"/>
    <property type="match status" value="1"/>
</dbReference>
<dbReference type="PANTHER" id="PTHR16172">
    <property type="entry name" value="MAJOR FACILITATOR SUPERFAMILY DOMAIN-CONTAINING PROTEIN 6-LIKE"/>
    <property type="match status" value="1"/>
</dbReference>
<dbReference type="Pfam" id="PF12832">
    <property type="entry name" value="MFS_1_like"/>
    <property type="match status" value="1"/>
</dbReference>
<dbReference type="SUPFAM" id="SSF103473">
    <property type="entry name" value="MFS general substrate transporter"/>
    <property type="match status" value="1"/>
</dbReference>
<accession>Q8CBH5</accession>
<accession>Q8C8K4</accession>
<accession>Q8VIG4</accession>
<organism>
    <name type="scientific">Mus musculus</name>
    <name type="common">Mouse</name>
    <dbReference type="NCBI Taxonomy" id="10090"/>
    <lineage>
        <taxon>Eukaryota</taxon>
        <taxon>Metazoa</taxon>
        <taxon>Chordata</taxon>
        <taxon>Craniata</taxon>
        <taxon>Vertebrata</taxon>
        <taxon>Euteleostomi</taxon>
        <taxon>Mammalia</taxon>
        <taxon>Eutheria</taxon>
        <taxon>Euarchontoglires</taxon>
        <taxon>Glires</taxon>
        <taxon>Rodentia</taxon>
        <taxon>Myomorpha</taxon>
        <taxon>Muroidea</taxon>
        <taxon>Muridae</taxon>
        <taxon>Murinae</taxon>
        <taxon>Mus</taxon>
        <taxon>Mus</taxon>
    </lineage>
</organism>
<reference key="1">
    <citation type="journal article" date="2005" name="Science">
        <title>The transcriptional landscape of the mammalian genome.</title>
        <authorList>
            <person name="Carninci P."/>
            <person name="Kasukawa T."/>
            <person name="Katayama S."/>
            <person name="Gough J."/>
            <person name="Frith M.C."/>
            <person name="Maeda N."/>
            <person name="Oyama R."/>
            <person name="Ravasi T."/>
            <person name="Lenhard B."/>
            <person name="Wells C."/>
            <person name="Kodzius R."/>
            <person name="Shimokawa K."/>
            <person name="Bajic V.B."/>
            <person name="Brenner S.E."/>
            <person name="Batalov S."/>
            <person name="Forrest A.R."/>
            <person name="Zavolan M."/>
            <person name="Davis M.J."/>
            <person name="Wilming L.G."/>
            <person name="Aidinis V."/>
            <person name="Allen J.E."/>
            <person name="Ambesi-Impiombato A."/>
            <person name="Apweiler R."/>
            <person name="Aturaliya R.N."/>
            <person name="Bailey T.L."/>
            <person name="Bansal M."/>
            <person name="Baxter L."/>
            <person name="Beisel K.W."/>
            <person name="Bersano T."/>
            <person name="Bono H."/>
            <person name="Chalk A.M."/>
            <person name="Chiu K.P."/>
            <person name="Choudhary V."/>
            <person name="Christoffels A."/>
            <person name="Clutterbuck D.R."/>
            <person name="Crowe M.L."/>
            <person name="Dalla E."/>
            <person name="Dalrymple B.P."/>
            <person name="de Bono B."/>
            <person name="Della Gatta G."/>
            <person name="di Bernardo D."/>
            <person name="Down T."/>
            <person name="Engstrom P."/>
            <person name="Fagiolini M."/>
            <person name="Faulkner G."/>
            <person name="Fletcher C.F."/>
            <person name="Fukushima T."/>
            <person name="Furuno M."/>
            <person name="Futaki S."/>
            <person name="Gariboldi M."/>
            <person name="Georgii-Hemming P."/>
            <person name="Gingeras T.R."/>
            <person name="Gojobori T."/>
            <person name="Green R.E."/>
            <person name="Gustincich S."/>
            <person name="Harbers M."/>
            <person name="Hayashi Y."/>
            <person name="Hensch T.K."/>
            <person name="Hirokawa N."/>
            <person name="Hill D."/>
            <person name="Huminiecki L."/>
            <person name="Iacono M."/>
            <person name="Ikeo K."/>
            <person name="Iwama A."/>
            <person name="Ishikawa T."/>
            <person name="Jakt M."/>
            <person name="Kanapin A."/>
            <person name="Katoh M."/>
            <person name="Kawasawa Y."/>
            <person name="Kelso J."/>
            <person name="Kitamura H."/>
            <person name="Kitano H."/>
            <person name="Kollias G."/>
            <person name="Krishnan S.P."/>
            <person name="Kruger A."/>
            <person name="Kummerfeld S.K."/>
            <person name="Kurochkin I.V."/>
            <person name="Lareau L.F."/>
            <person name="Lazarevic D."/>
            <person name="Lipovich L."/>
            <person name="Liu J."/>
            <person name="Liuni S."/>
            <person name="McWilliam S."/>
            <person name="Madan Babu M."/>
            <person name="Madera M."/>
            <person name="Marchionni L."/>
            <person name="Matsuda H."/>
            <person name="Matsuzawa S."/>
            <person name="Miki H."/>
            <person name="Mignone F."/>
            <person name="Miyake S."/>
            <person name="Morris K."/>
            <person name="Mottagui-Tabar S."/>
            <person name="Mulder N."/>
            <person name="Nakano N."/>
            <person name="Nakauchi H."/>
            <person name="Ng P."/>
            <person name="Nilsson R."/>
            <person name="Nishiguchi S."/>
            <person name="Nishikawa S."/>
            <person name="Nori F."/>
            <person name="Ohara O."/>
            <person name="Okazaki Y."/>
            <person name="Orlando V."/>
            <person name="Pang K.C."/>
            <person name="Pavan W.J."/>
            <person name="Pavesi G."/>
            <person name="Pesole G."/>
            <person name="Petrovsky N."/>
            <person name="Piazza S."/>
            <person name="Reed J."/>
            <person name="Reid J.F."/>
            <person name="Ring B.Z."/>
            <person name="Ringwald M."/>
            <person name="Rost B."/>
            <person name="Ruan Y."/>
            <person name="Salzberg S.L."/>
            <person name="Sandelin A."/>
            <person name="Schneider C."/>
            <person name="Schoenbach C."/>
            <person name="Sekiguchi K."/>
            <person name="Semple C.A."/>
            <person name="Seno S."/>
            <person name="Sessa L."/>
            <person name="Sheng Y."/>
            <person name="Shibata Y."/>
            <person name="Shimada H."/>
            <person name="Shimada K."/>
            <person name="Silva D."/>
            <person name="Sinclair B."/>
            <person name="Sperling S."/>
            <person name="Stupka E."/>
            <person name="Sugiura K."/>
            <person name="Sultana R."/>
            <person name="Takenaka Y."/>
            <person name="Taki K."/>
            <person name="Tammoja K."/>
            <person name="Tan S.L."/>
            <person name="Tang S."/>
            <person name="Taylor M.S."/>
            <person name="Tegner J."/>
            <person name="Teichmann S.A."/>
            <person name="Ueda H.R."/>
            <person name="van Nimwegen E."/>
            <person name="Verardo R."/>
            <person name="Wei C.L."/>
            <person name="Yagi K."/>
            <person name="Yamanishi H."/>
            <person name="Zabarovsky E."/>
            <person name="Zhu S."/>
            <person name="Zimmer A."/>
            <person name="Hide W."/>
            <person name="Bult C."/>
            <person name="Grimmond S.M."/>
            <person name="Teasdale R.D."/>
            <person name="Liu E.T."/>
            <person name="Brusic V."/>
            <person name="Quackenbush J."/>
            <person name="Wahlestedt C."/>
            <person name="Mattick J.S."/>
            <person name="Hume D.A."/>
            <person name="Kai C."/>
            <person name="Sasaki D."/>
            <person name="Tomaru Y."/>
            <person name="Fukuda S."/>
            <person name="Kanamori-Katayama M."/>
            <person name="Suzuki M."/>
            <person name="Aoki J."/>
            <person name="Arakawa T."/>
            <person name="Iida J."/>
            <person name="Imamura K."/>
            <person name="Itoh M."/>
            <person name="Kato T."/>
            <person name="Kawaji H."/>
            <person name="Kawagashira N."/>
            <person name="Kawashima T."/>
            <person name="Kojima M."/>
            <person name="Kondo S."/>
            <person name="Konno H."/>
            <person name="Nakano K."/>
            <person name="Ninomiya N."/>
            <person name="Nishio T."/>
            <person name="Okada M."/>
            <person name="Plessy C."/>
            <person name="Shibata K."/>
            <person name="Shiraki T."/>
            <person name="Suzuki S."/>
            <person name="Tagami M."/>
            <person name="Waki K."/>
            <person name="Watahiki A."/>
            <person name="Okamura-Oho Y."/>
            <person name="Suzuki H."/>
            <person name="Kawai J."/>
            <person name="Hayashizaki Y."/>
        </authorList>
    </citation>
    <scope>NUCLEOTIDE SEQUENCE [LARGE SCALE MRNA] (ISOFORM 1)</scope>
    <source>
        <strain>C57BL/6J</strain>
        <tissue>Cerebellum</tissue>
        <tissue>Medulla oblongata</tissue>
    </source>
</reference>
<reference key="2">
    <citation type="journal article" date="2006" name="Gene">
        <title>Macrophage MHC receptor 2: a novel receptor on allograft (H-2D(d)K(d))-induced macrophage (H-2D(b)K(b)) recognizing an MHC class I molecule, H-2K(d), in mice.</title>
        <authorList>
            <person name="Tashiro-Yamaji J."/>
            <person name="Kubota T."/>
            <person name="Yoshida R."/>
        </authorList>
    </citation>
    <scope>NUCLEOTIDE SEQUENCE [MRNA] OF 14-775 (ISOFORM 1)</scope>
    <scope>FUNCTION</scope>
    <source>
        <strain>C57BL/6J</strain>
        <tissue>Macrophage</tissue>
    </source>
</reference>
<reference key="3">
    <citation type="journal article" date="2004" name="Genome Res.">
        <title>The status, quality, and expansion of the NIH full-length cDNA project: the Mammalian Gene Collection (MGC).</title>
        <authorList>
            <consortium name="The MGC Project Team"/>
        </authorList>
    </citation>
    <scope>NUCLEOTIDE SEQUENCE [LARGE SCALE MRNA] OF 183-775 (ISOFORM 2)</scope>
    <source>
        <strain>FVB/N</strain>
        <tissue>Mammary tumor</tissue>
    </source>
</reference>
<reference key="4">
    <citation type="journal article" date="2009" name="Immunity">
        <title>The phagosomal proteome in interferon-gamma-activated macrophages.</title>
        <authorList>
            <person name="Trost M."/>
            <person name="English L."/>
            <person name="Lemieux S."/>
            <person name="Courcelles M."/>
            <person name="Desjardins M."/>
            <person name="Thibault P."/>
        </authorList>
    </citation>
    <scope>PHOSPHORYLATION [LARGE SCALE ANALYSIS] AT THR-11</scope>
    <scope>IDENTIFICATION BY MASS SPECTROMETRY [LARGE SCALE ANALYSIS]</scope>
</reference>
<reference key="5">
    <citation type="journal article" date="2010" name="Cell">
        <title>A tissue-specific atlas of mouse protein phosphorylation and expression.</title>
        <authorList>
            <person name="Huttlin E.L."/>
            <person name="Jedrychowski M.P."/>
            <person name="Elias J.E."/>
            <person name="Goswami T."/>
            <person name="Rad R."/>
            <person name="Beausoleil S.A."/>
            <person name="Villen J."/>
            <person name="Haas W."/>
            <person name="Sowa M.E."/>
            <person name="Gygi S.P."/>
        </authorList>
    </citation>
    <scope>PHOSPHORYLATION [LARGE SCALE ANALYSIS] AT THR-11</scope>
    <scope>IDENTIFICATION BY MASS SPECTROMETRY [LARGE SCALE ANALYSIS]</scope>
    <source>
        <tissue>Brain</tissue>
    </source>
</reference>